<proteinExistence type="inferred from homology"/>
<protein>
    <recommendedName>
        <fullName evidence="1">5'/3'-nucleotidase SurE</fullName>
        <ecNumber evidence="1">3.1.3.5</ecNumber>
        <ecNumber evidence="1">3.1.3.6</ecNumber>
    </recommendedName>
    <alternativeName>
        <fullName evidence="1">Exopolyphosphatase</fullName>
        <ecNumber evidence="1">3.6.1.11</ecNumber>
    </alternativeName>
    <alternativeName>
        <fullName evidence="1">Nucleoside monophosphate phosphohydrolase</fullName>
    </alternativeName>
</protein>
<gene>
    <name evidence="1" type="primary">surE</name>
    <name type="ordered locus">NT01EI_3253</name>
</gene>
<feature type="chain" id="PRO_1000202367" description="5'/3'-nucleotidase SurE">
    <location>
        <begin position="1"/>
        <end position="254"/>
    </location>
</feature>
<feature type="binding site" evidence="1">
    <location>
        <position position="8"/>
    </location>
    <ligand>
        <name>a divalent metal cation</name>
        <dbReference type="ChEBI" id="CHEBI:60240"/>
    </ligand>
</feature>
<feature type="binding site" evidence="1">
    <location>
        <position position="9"/>
    </location>
    <ligand>
        <name>a divalent metal cation</name>
        <dbReference type="ChEBI" id="CHEBI:60240"/>
    </ligand>
</feature>
<feature type="binding site" evidence="1">
    <location>
        <position position="39"/>
    </location>
    <ligand>
        <name>a divalent metal cation</name>
        <dbReference type="ChEBI" id="CHEBI:60240"/>
    </ligand>
</feature>
<feature type="binding site" evidence="1">
    <location>
        <position position="92"/>
    </location>
    <ligand>
        <name>a divalent metal cation</name>
        <dbReference type="ChEBI" id="CHEBI:60240"/>
    </ligand>
</feature>
<comment type="function">
    <text evidence="1">Nucleotidase with a broad substrate specificity as it can dephosphorylate various ribo- and deoxyribonucleoside 5'-monophosphates and ribonucleoside 3'-monophosphates with highest affinity to 3'-AMP. Also hydrolyzes polyphosphate (exopolyphosphatase activity) with the preference for short-chain-length substrates (P20-25). Might be involved in the regulation of dNTP and NTP pools, and in the turnover of 3'-mononucleotides produced by numerous intracellular RNases (T1, T2, and F) during the degradation of various RNAs.</text>
</comment>
<comment type="catalytic activity">
    <reaction evidence="1">
        <text>a ribonucleoside 5'-phosphate + H2O = a ribonucleoside + phosphate</text>
        <dbReference type="Rhea" id="RHEA:12484"/>
        <dbReference type="ChEBI" id="CHEBI:15377"/>
        <dbReference type="ChEBI" id="CHEBI:18254"/>
        <dbReference type="ChEBI" id="CHEBI:43474"/>
        <dbReference type="ChEBI" id="CHEBI:58043"/>
        <dbReference type="EC" id="3.1.3.5"/>
    </reaction>
</comment>
<comment type="catalytic activity">
    <reaction evidence="1">
        <text>a ribonucleoside 3'-phosphate + H2O = a ribonucleoside + phosphate</text>
        <dbReference type="Rhea" id="RHEA:10144"/>
        <dbReference type="ChEBI" id="CHEBI:13197"/>
        <dbReference type="ChEBI" id="CHEBI:15377"/>
        <dbReference type="ChEBI" id="CHEBI:18254"/>
        <dbReference type="ChEBI" id="CHEBI:43474"/>
        <dbReference type="EC" id="3.1.3.6"/>
    </reaction>
</comment>
<comment type="catalytic activity">
    <reaction evidence="1">
        <text>[phosphate](n) + H2O = [phosphate](n-1) + phosphate + H(+)</text>
        <dbReference type="Rhea" id="RHEA:21528"/>
        <dbReference type="Rhea" id="RHEA-COMP:9859"/>
        <dbReference type="Rhea" id="RHEA-COMP:14279"/>
        <dbReference type="ChEBI" id="CHEBI:15377"/>
        <dbReference type="ChEBI" id="CHEBI:15378"/>
        <dbReference type="ChEBI" id="CHEBI:16838"/>
        <dbReference type="ChEBI" id="CHEBI:43474"/>
        <dbReference type="EC" id="3.6.1.11"/>
    </reaction>
</comment>
<comment type="cofactor">
    <cofactor evidence="1">
        <name>a divalent metal cation</name>
        <dbReference type="ChEBI" id="CHEBI:60240"/>
    </cofactor>
    <text evidence="1">Binds 1 divalent metal cation per subunit.</text>
</comment>
<comment type="subcellular location">
    <subcellularLocation>
        <location evidence="1">Cytoplasm</location>
    </subcellularLocation>
</comment>
<comment type="similarity">
    <text evidence="1">Belongs to the SurE nucleotidase family.</text>
</comment>
<evidence type="ECO:0000255" key="1">
    <source>
        <dbReference type="HAMAP-Rule" id="MF_00060"/>
    </source>
</evidence>
<accession>C5BGI8</accession>
<reference key="1">
    <citation type="submission" date="2009-03" db="EMBL/GenBank/DDBJ databases">
        <title>Complete genome sequence of Edwardsiella ictaluri 93-146.</title>
        <authorList>
            <person name="Williams M.L."/>
            <person name="Gillaspy A.F."/>
            <person name="Dyer D.W."/>
            <person name="Thune R.L."/>
            <person name="Waldbieser G.C."/>
            <person name="Schuster S.C."/>
            <person name="Gipson J."/>
            <person name="Zaitshik J."/>
            <person name="Landry C."/>
            <person name="Lawrence M.L."/>
        </authorList>
    </citation>
    <scope>NUCLEOTIDE SEQUENCE [LARGE SCALE GENOMIC DNA]</scope>
    <source>
        <strain>93-146</strain>
    </source>
</reference>
<sequence>MRILLSNDDGVTAPGIQTLAAALREFAQVQVVAPNRNRSGSSNALTLESPLRSETLANGDISVIDGTPTDCVYLGVNALMRPRPDIVIAGINAGPNLGDDVIYSGTVAAAMEGRHLGFPALAVSLDGERHYDTAAAVTCRLLRMLSDAPLRSGRILNVNVPDVPLTAIRGWRVTRCGSRHPAQTVIHQQDPRGKPLMWIGPPGAKQDAGEETDFAAVAAGYISVTPLQVDLTAHGARGRLAEWLGRVDKGGAAW</sequence>
<organism>
    <name type="scientific">Edwardsiella ictaluri (strain 93-146)</name>
    <dbReference type="NCBI Taxonomy" id="634503"/>
    <lineage>
        <taxon>Bacteria</taxon>
        <taxon>Pseudomonadati</taxon>
        <taxon>Pseudomonadota</taxon>
        <taxon>Gammaproteobacteria</taxon>
        <taxon>Enterobacterales</taxon>
        <taxon>Hafniaceae</taxon>
        <taxon>Edwardsiella</taxon>
    </lineage>
</organism>
<keyword id="KW-0963">Cytoplasm</keyword>
<keyword id="KW-0378">Hydrolase</keyword>
<keyword id="KW-0479">Metal-binding</keyword>
<keyword id="KW-0547">Nucleotide-binding</keyword>
<name>SURE_EDWI9</name>
<dbReference type="EC" id="3.1.3.5" evidence="1"/>
<dbReference type="EC" id="3.1.3.6" evidence="1"/>
<dbReference type="EC" id="3.6.1.11" evidence="1"/>
<dbReference type="EMBL" id="CP001600">
    <property type="protein sequence ID" value="ACR70394.1"/>
    <property type="molecule type" value="Genomic_DNA"/>
</dbReference>
<dbReference type="RefSeq" id="WP_015872476.1">
    <property type="nucleotide sequence ID" value="NZ_CP169062.1"/>
</dbReference>
<dbReference type="SMR" id="C5BGI8"/>
<dbReference type="STRING" id="67780.B6E78_07895"/>
<dbReference type="GeneID" id="69540117"/>
<dbReference type="KEGG" id="eic:NT01EI_3253"/>
<dbReference type="PATRIC" id="fig|634503.3.peg.2899"/>
<dbReference type="HOGENOM" id="CLU_045192_1_2_6"/>
<dbReference type="OrthoDB" id="9780815at2"/>
<dbReference type="Proteomes" id="UP000001485">
    <property type="component" value="Chromosome"/>
</dbReference>
<dbReference type="GO" id="GO:0005737">
    <property type="term" value="C:cytoplasm"/>
    <property type="evidence" value="ECO:0007669"/>
    <property type="project" value="UniProtKB-SubCell"/>
</dbReference>
<dbReference type="GO" id="GO:0008254">
    <property type="term" value="F:3'-nucleotidase activity"/>
    <property type="evidence" value="ECO:0007669"/>
    <property type="project" value="UniProtKB-UniRule"/>
</dbReference>
<dbReference type="GO" id="GO:0008253">
    <property type="term" value="F:5'-nucleotidase activity"/>
    <property type="evidence" value="ECO:0007669"/>
    <property type="project" value="UniProtKB-UniRule"/>
</dbReference>
<dbReference type="GO" id="GO:0004309">
    <property type="term" value="F:exopolyphosphatase activity"/>
    <property type="evidence" value="ECO:0007669"/>
    <property type="project" value="UniProtKB-UniRule"/>
</dbReference>
<dbReference type="GO" id="GO:0046872">
    <property type="term" value="F:metal ion binding"/>
    <property type="evidence" value="ECO:0007669"/>
    <property type="project" value="UniProtKB-UniRule"/>
</dbReference>
<dbReference type="GO" id="GO:0000166">
    <property type="term" value="F:nucleotide binding"/>
    <property type="evidence" value="ECO:0007669"/>
    <property type="project" value="UniProtKB-KW"/>
</dbReference>
<dbReference type="FunFam" id="3.40.1210.10:FF:000001">
    <property type="entry name" value="5'/3'-nucleotidase SurE"/>
    <property type="match status" value="1"/>
</dbReference>
<dbReference type="Gene3D" id="3.40.1210.10">
    <property type="entry name" value="Survival protein SurE-like phosphatase/nucleotidase"/>
    <property type="match status" value="1"/>
</dbReference>
<dbReference type="HAMAP" id="MF_00060">
    <property type="entry name" value="SurE"/>
    <property type="match status" value="1"/>
</dbReference>
<dbReference type="InterPro" id="IPR030048">
    <property type="entry name" value="SurE"/>
</dbReference>
<dbReference type="InterPro" id="IPR002828">
    <property type="entry name" value="SurE-like_Pase/nucleotidase"/>
</dbReference>
<dbReference type="InterPro" id="IPR036523">
    <property type="entry name" value="SurE-like_sf"/>
</dbReference>
<dbReference type="NCBIfam" id="NF001488">
    <property type="entry name" value="PRK00346.1-1"/>
    <property type="match status" value="1"/>
</dbReference>
<dbReference type="NCBIfam" id="NF001489">
    <property type="entry name" value="PRK00346.1-3"/>
    <property type="match status" value="1"/>
</dbReference>
<dbReference type="NCBIfam" id="NF001490">
    <property type="entry name" value="PRK00346.1-4"/>
    <property type="match status" value="1"/>
</dbReference>
<dbReference type="NCBIfam" id="TIGR00087">
    <property type="entry name" value="surE"/>
    <property type="match status" value="1"/>
</dbReference>
<dbReference type="PANTHER" id="PTHR30457">
    <property type="entry name" value="5'-NUCLEOTIDASE SURE"/>
    <property type="match status" value="1"/>
</dbReference>
<dbReference type="PANTHER" id="PTHR30457:SF12">
    <property type="entry name" value="5'_3'-NUCLEOTIDASE SURE"/>
    <property type="match status" value="1"/>
</dbReference>
<dbReference type="Pfam" id="PF01975">
    <property type="entry name" value="SurE"/>
    <property type="match status" value="1"/>
</dbReference>
<dbReference type="SUPFAM" id="SSF64167">
    <property type="entry name" value="SurE-like"/>
    <property type="match status" value="1"/>
</dbReference>